<sequence length="160" mass="17375">MVAQIRIGQGMDVHAFEEGNFVTLAGVQIPHTHGLKAHSDGDVVLHALCDALLGALALGDIGQHFPDTDPEFKGADSRVLLKHVYQLILDRGYHLNNADITVACERPKLAKYNLEMRQSIADVLNVDLNQISIKATTTEKLGFTGRQEGILATATVLISH</sequence>
<accession>B7I9W0</accession>
<dbReference type="EC" id="4.6.1.12" evidence="1"/>
<dbReference type="EMBL" id="CP001182">
    <property type="protein sequence ID" value="ACJ42442.1"/>
    <property type="molecule type" value="Genomic_DNA"/>
</dbReference>
<dbReference type="RefSeq" id="WP_000226512.1">
    <property type="nucleotide sequence ID" value="NC_011586.2"/>
</dbReference>
<dbReference type="SMR" id="B7I9W0"/>
<dbReference type="GeneID" id="92894244"/>
<dbReference type="KEGG" id="abn:AB57_2327"/>
<dbReference type="HOGENOM" id="CLU_084630_2_0_6"/>
<dbReference type="UniPathway" id="UPA00056">
    <property type="reaction ID" value="UER00095"/>
</dbReference>
<dbReference type="Proteomes" id="UP000007094">
    <property type="component" value="Chromosome"/>
</dbReference>
<dbReference type="GO" id="GO:0008685">
    <property type="term" value="F:2-C-methyl-D-erythritol 2,4-cyclodiphosphate synthase activity"/>
    <property type="evidence" value="ECO:0007669"/>
    <property type="project" value="UniProtKB-UniRule"/>
</dbReference>
<dbReference type="GO" id="GO:0046872">
    <property type="term" value="F:metal ion binding"/>
    <property type="evidence" value="ECO:0007669"/>
    <property type="project" value="UniProtKB-KW"/>
</dbReference>
<dbReference type="GO" id="GO:0019288">
    <property type="term" value="P:isopentenyl diphosphate biosynthetic process, methylerythritol 4-phosphate pathway"/>
    <property type="evidence" value="ECO:0007669"/>
    <property type="project" value="UniProtKB-UniRule"/>
</dbReference>
<dbReference type="GO" id="GO:0016114">
    <property type="term" value="P:terpenoid biosynthetic process"/>
    <property type="evidence" value="ECO:0007669"/>
    <property type="project" value="InterPro"/>
</dbReference>
<dbReference type="CDD" id="cd00554">
    <property type="entry name" value="MECDP_synthase"/>
    <property type="match status" value="1"/>
</dbReference>
<dbReference type="FunFam" id="3.30.1330.50:FF:000001">
    <property type="entry name" value="2-C-methyl-D-erythritol 2,4-cyclodiphosphate synthase"/>
    <property type="match status" value="1"/>
</dbReference>
<dbReference type="Gene3D" id="3.30.1330.50">
    <property type="entry name" value="2-C-methyl-D-erythritol 2,4-cyclodiphosphate synthase"/>
    <property type="match status" value="1"/>
</dbReference>
<dbReference type="HAMAP" id="MF_00107">
    <property type="entry name" value="IspF"/>
    <property type="match status" value="1"/>
</dbReference>
<dbReference type="InterPro" id="IPR003526">
    <property type="entry name" value="MECDP_synthase"/>
</dbReference>
<dbReference type="InterPro" id="IPR020555">
    <property type="entry name" value="MECDP_synthase_CS"/>
</dbReference>
<dbReference type="InterPro" id="IPR036571">
    <property type="entry name" value="MECDP_synthase_sf"/>
</dbReference>
<dbReference type="NCBIfam" id="TIGR00151">
    <property type="entry name" value="ispF"/>
    <property type="match status" value="1"/>
</dbReference>
<dbReference type="PANTHER" id="PTHR43181">
    <property type="entry name" value="2-C-METHYL-D-ERYTHRITOL 2,4-CYCLODIPHOSPHATE SYNTHASE, CHLOROPLASTIC"/>
    <property type="match status" value="1"/>
</dbReference>
<dbReference type="PANTHER" id="PTHR43181:SF1">
    <property type="entry name" value="2-C-METHYL-D-ERYTHRITOL 2,4-CYCLODIPHOSPHATE SYNTHASE, CHLOROPLASTIC"/>
    <property type="match status" value="1"/>
</dbReference>
<dbReference type="Pfam" id="PF02542">
    <property type="entry name" value="YgbB"/>
    <property type="match status" value="1"/>
</dbReference>
<dbReference type="SUPFAM" id="SSF69765">
    <property type="entry name" value="IpsF-like"/>
    <property type="match status" value="1"/>
</dbReference>
<dbReference type="PROSITE" id="PS01350">
    <property type="entry name" value="ISPF"/>
    <property type="match status" value="1"/>
</dbReference>
<protein>
    <recommendedName>
        <fullName evidence="1">2-C-methyl-D-erythritol 2,4-cyclodiphosphate synthase</fullName>
        <shortName evidence="1">MECDP-synthase</shortName>
        <shortName evidence="1">MECPP-synthase</shortName>
        <shortName evidence="1">MECPS</shortName>
        <ecNumber evidence="1">4.6.1.12</ecNumber>
    </recommendedName>
</protein>
<comment type="function">
    <text evidence="1">Involved in the biosynthesis of isopentenyl diphosphate (IPP) and dimethylallyl diphosphate (DMAPP), two major building blocks of isoprenoid compounds. Catalyzes the conversion of 4-diphosphocytidyl-2-C-methyl-D-erythritol 2-phosphate (CDP-ME2P) to 2-C-methyl-D-erythritol 2,4-cyclodiphosphate (ME-CPP) with a corresponding release of cytidine 5-monophosphate (CMP).</text>
</comment>
<comment type="catalytic activity">
    <reaction evidence="1">
        <text>4-CDP-2-C-methyl-D-erythritol 2-phosphate = 2-C-methyl-D-erythritol 2,4-cyclic diphosphate + CMP</text>
        <dbReference type="Rhea" id="RHEA:23864"/>
        <dbReference type="ChEBI" id="CHEBI:57919"/>
        <dbReference type="ChEBI" id="CHEBI:58483"/>
        <dbReference type="ChEBI" id="CHEBI:60377"/>
        <dbReference type="EC" id="4.6.1.12"/>
    </reaction>
</comment>
<comment type="cofactor">
    <cofactor evidence="1">
        <name>a divalent metal cation</name>
        <dbReference type="ChEBI" id="CHEBI:60240"/>
    </cofactor>
    <text evidence="1">Binds 1 divalent metal cation per subunit.</text>
</comment>
<comment type="pathway">
    <text evidence="1">Isoprenoid biosynthesis; isopentenyl diphosphate biosynthesis via DXP pathway; isopentenyl diphosphate from 1-deoxy-D-xylulose 5-phosphate: step 4/6.</text>
</comment>
<comment type="subunit">
    <text evidence="1">Homotrimer.</text>
</comment>
<comment type="similarity">
    <text evidence="1">Belongs to the IspF family.</text>
</comment>
<feature type="chain" id="PRO_1000117415" description="2-C-methyl-D-erythritol 2,4-cyclodiphosphate synthase">
    <location>
        <begin position="1"/>
        <end position="160"/>
    </location>
</feature>
<feature type="binding site" evidence="1">
    <location>
        <begin position="12"/>
        <end position="14"/>
    </location>
    <ligand>
        <name>4-CDP-2-C-methyl-D-erythritol 2-phosphate</name>
        <dbReference type="ChEBI" id="CHEBI:57919"/>
    </ligand>
</feature>
<feature type="binding site" evidence="1">
    <location>
        <position position="12"/>
    </location>
    <ligand>
        <name>a divalent metal cation</name>
        <dbReference type="ChEBI" id="CHEBI:60240"/>
    </ligand>
</feature>
<feature type="binding site" evidence="1">
    <location>
        <position position="14"/>
    </location>
    <ligand>
        <name>a divalent metal cation</name>
        <dbReference type="ChEBI" id="CHEBI:60240"/>
    </ligand>
</feature>
<feature type="binding site" evidence="1">
    <location>
        <begin position="38"/>
        <end position="39"/>
    </location>
    <ligand>
        <name>4-CDP-2-C-methyl-D-erythritol 2-phosphate</name>
        <dbReference type="ChEBI" id="CHEBI:57919"/>
    </ligand>
</feature>
<feature type="binding site" evidence="1">
    <location>
        <position position="46"/>
    </location>
    <ligand>
        <name>a divalent metal cation</name>
        <dbReference type="ChEBI" id="CHEBI:60240"/>
    </ligand>
</feature>
<feature type="binding site" evidence="1">
    <location>
        <begin position="60"/>
        <end position="62"/>
    </location>
    <ligand>
        <name>4-CDP-2-C-methyl-D-erythritol 2-phosphate</name>
        <dbReference type="ChEBI" id="CHEBI:57919"/>
    </ligand>
</feature>
<feature type="binding site" evidence="1">
    <location>
        <begin position="65"/>
        <end position="69"/>
    </location>
    <ligand>
        <name>4-CDP-2-C-methyl-D-erythritol 2-phosphate</name>
        <dbReference type="ChEBI" id="CHEBI:57919"/>
    </ligand>
</feature>
<feature type="binding site" evidence="1">
    <location>
        <begin position="136"/>
        <end position="139"/>
    </location>
    <ligand>
        <name>4-CDP-2-C-methyl-D-erythritol 2-phosphate</name>
        <dbReference type="ChEBI" id="CHEBI:57919"/>
    </ligand>
</feature>
<feature type="binding site" evidence="1">
    <location>
        <position position="143"/>
    </location>
    <ligand>
        <name>4-CDP-2-C-methyl-D-erythritol 2-phosphate</name>
        <dbReference type="ChEBI" id="CHEBI:57919"/>
    </ligand>
</feature>
<feature type="binding site" evidence="1">
    <location>
        <position position="146"/>
    </location>
    <ligand>
        <name>4-CDP-2-C-methyl-D-erythritol 2-phosphate</name>
        <dbReference type="ChEBI" id="CHEBI:57919"/>
    </ligand>
</feature>
<feature type="site" description="Transition state stabilizer" evidence="1">
    <location>
        <position position="38"/>
    </location>
</feature>
<feature type="site" description="Transition state stabilizer" evidence="1">
    <location>
        <position position="137"/>
    </location>
</feature>
<reference key="1">
    <citation type="journal article" date="2008" name="J. Bacteriol.">
        <title>Comparative genome sequence analysis of multidrug-resistant Acinetobacter baumannii.</title>
        <authorList>
            <person name="Adams M.D."/>
            <person name="Goglin K."/>
            <person name="Molyneaux N."/>
            <person name="Hujer K.M."/>
            <person name="Lavender H."/>
            <person name="Jamison J.J."/>
            <person name="MacDonald I.J."/>
            <person name="Martin K.M."/>
            <person name="Russo T."/>
            <person name="Campagnari A.A."/>
            <person name="Hujer A.M."/>
            <person name="Bonomo R.A."/>
            <person name="Gill S.R."/>
        </authorList>
    </citation>
    <scope>NUCLEOTIDE SEQUENCE [LARGE SCALE GENOMIC DNA]</scope>
    <source>
        <strain>AB0057</strain>
    </source>
</reference>
<proteinExistence type="inferred from homology"/>
<gene>
    <name evidence="1" type="primary">ispF</name>
    <name type="ordered locus">AB57_2327</name>
</gene>
<evidence type="ECO:0000255" key="1">
    <source>
        <dbReference type="HAMAP-Rule" id="MF_00107"/>
    </source>
</evidence>
<name>ISPF_ACIB5</name>
<keyword id="KW-0414">Isoprene biosynthesis</keyword>
<keyword id="KW-0456">Lyase</keyword>
<keyword id="KW-0479">Metal-binding</keyword>
<organism>
    <name type="scientific">Acinetobacter baumannii (strain AB0057)</name>
    <dbReference type="NCBI Taxonomy" id="480119"/>
    <lineage>
        <taxon>Bacteria</taxon>
        <taxon>Pseudomonadati</taxon>
        <taxon>Pseudomonadota</taxon>
        <taxon>Gammaproteobacteria</taxon>
        <taxon>Moraxellales</taxon>
        <taxon>Moraxellaceae</taxon>
        <taxon>Acinetobacter</taxon>
        <taxon>Acinetobacter calcoaceticus/baumannii complex</taxon>
    </lineage>
</organism>